<reference key="1">
    <citation type="journal article" date="1988" name="Gene">
        <title>Nucleotide sequence analysis and expression of a tetracycline-resistance gene from Campylobacter jejuni.</title>
        <authorList>
            <person name="Manavathu E.K."/>
            <person name="Hiratsuka K."/>
            <person name="Taylor D.E."/>
        </authorList>
    </citation>
    <scope>NUCLEOTIDE SEQUENCE [GENOMIC DNA]</scope>
</reference>
<reference key="2">
    <citation type="submission" date="2003-06" db="EMBL/GenBank/DDBJ databases">
        <authorList>
            <person name="Manavathu E.K."/>
            <person name="Hiratsuka K."/>
            <person name="Taylor D.E."/>
        </authorList>
    </citation>
    <scope>SEQUENCE REVISION TO 591 AND 636-639</scope>
</reference>
<dbReference type="EMBL" id="M18896">
    <property type="protein sequence ID" value="AAA23033.2"/>
    <property type="molecule type" value="Genomic_DNA"/>
</dbReference>
<dbReference type="PIR" id="A29809">
    <property type="entry name" value="A29809"/>
</dbReference>
<dbReference type="RefSeq" id="WP_002779752.1">
    <property type="nucleotide sequence ID" value="NZ_NFQB01000029.1"/>
</dbReference>
<dbReference type="PDB" id="4V6V">
    <property type="method" value="EM"/>
    <property type="resolution" value="9.80 A"/>
    <property type="chains" value="A1=1-639"/>
</dbReference>
<dbReference type="PDBsum" id="4V6V"/>
<dbReference type="SMR" id="P10952"/>
<dbReference type="CARD" id="ARO:3000190">
    <property type="molecule name" value="tet(O)"/>
    <property type="mechanism identifier" value="ARO:0001003"/>
    <property type="mechanism name" value="antibiotic target protection"/>
</dbReference>
<dbReference type="KEGG" id="ag:AAA23033"/>
<dbReference type="GO" id="GO:0005525">
    <property type="term" value="F:GTP binding"/>
    <property type="evidence" value="ECO:0007669"/>
    <property type="project" value="UniProtKB-KW"/>
</dbReference>
<dbReference type="GO" id="GO:0003924">
    <property type="term" value="F:GTPase activity"/>
    <property type="evidence" value="ECO:0007669"/>
    <property type="project" value="InterPro"/>
</dbReference>
<dbReference type="GO" id="GO:0046677">
    <property type="term" value="P:response to antibiotic"/>
    <property type="evidence" value="ECO:0007669"/>
    <property type="project" value="UniProtKB-KW"/>
</dbReference>
<dbReference type="GO" id="GO:0032790">
    <property type="term" value="P:ribosome disassembly"/>
    <property type="evidence" value="ECO:0007669"/>
    <property type="project" value="TreeGrafter"/>
</dbReference>
<dbReference type="GO" id="GO:0006412">
    <property type="term" value="P:translation"/>
    <property type="evidence" value="ECO:0007669"/>
    <property type="project" value="UniProtKB-KW"/>
</dbReference>
<dbReference type="CDD" id="cd03711">
    <property type="entry name" value="Tet_C"/>
    <property type="match status" value="1"/>
</dbReference>
<dbReference type="CDD" id="cd03690">
    <property type="entry name" value="Tet_II"/>
    <property type="match status" value="1"/>
</dbReference>
<dbReference type="CDD" id="cd16258">
    <property type="entry name" value="Tet_III"/>
    <property type="match status" value="1"/>
</dbReference>
<dbReference type="CDD" id="cd01684">
    <property type="entry name" value="Tet_like_IV"/>
    <property type="match status" value="1"/>
</dbReference>
<dbReference type="CDD" id="cd04168">
    <property type="entry name" value="TetM_like"/>
    <property type="match status" value="1"/>
</dbReference>
<dbReference type="Gene3D" id="3.30.230.10">
    <property type="match status" value="1"/>
</dbReference>
<dbReference type="Gene3D" id="3.30.70.240">
    <property type="match status" value="1"/>
</dbReference>
<dbReference type="Gene3D" id="3.30.70.870">
    <property type="entry name" value="Elongation Factor G (Translational Gtpase), domain 3"/>
    <property type="match status" value="1"/>
</dbReference>
<dbReference type="Gene3D" id="3.40.50.300">
    <property type="entry name" value="P-loop containing nucleotide triphosphate hydrolases"/>
    <property type="match status" value="1"/>
</dbReference>
<dbReference type="Gene3D" id="2.40.30.10">
    <property type="entry name" value="Translation factors"/>
    <property type="match status" value="1"/>
</dbReference>
<dbReference type="InterPro" id="IPR053905">
    <property type="entry name" value="EF-G-like_DII"/>
</dbReference>
<dbReference type="InterPro" id="IPR041095">
    <property type="entry name" value="EFG_II"/>
</dbReference>
<dbReference type="InterPro" id="IPR035647">
    <property type="entry name" value="EFG_III/V"/>
</dbReference>
<dbReference type="InterPro" id="IPR000640">
    <property type="entry name" value="EFG_V-like"/>
</dbReference>
<dbReference type="InterPro" id="IPR031157">
    <property type="entry name" value="G_TR_CS"/>
</dbReference>
<dbReference type="InterPro" id="IPR027417">
    <property type="entry name" value="P-loop_NTPase"/>
</dbReference>
<dbReference type="InterPro" id="IPR020568">
    <property type="entry name" value="Ribosomal_Su5_D2-typ_SF"/>
</dbReference>
<dbReference type="InterPro" id="IPR014721">
    <property type="entry name" value="Ribsml_uS5_D2-typ_fold_subgr"/>
</dbReference>
<dbReference type="InterPro" id="IPR005225">
    <property type="entry name" value="Small_GTP-bd"/>
</dbReference>
<dbReference type="InterPro" id="IPR000795">
    <property type="entry name" value="T_Tr_GTP-bd_dom"/>
</dbReference>
<dbReference type="InterPro" id="IPR035650">
    <property type="entry name" value="Tet_C"/>
</dbReference>
<dbReference type="InterPro" id="IPR009000">
    <property type="entry name" value="Transl_B-barrel_sf"/>
</dbReference>
<dbReference type="InterPro" id="IPR005517">
    <property type="entry name" value="Transl_elong_EFG/EF2_IV"/>
</dbReference>
<dbReference type="NCBIfam" id="TIGR00231">
    <property type="entry name" value="small_GTP"/>
    <property type="match status" value="1"/>
</dbReference>
<dbReference type="NCBIfam" id="NF012153">
    <property type="entry name" value="tet_protect"/>
    <property type="match status" value="1"/>
</dbReference>
<dbReference type="NCBIfam" id="NF033148">
    <property type="entry name" value="tet_protect_M_W"/>
    <property type="match status" value="1"/>
</dbReference>
<dbReference type="PANTHER" id="PTHR43261:SF1">
    <property type="entry name" value="RIBOSOME-RELEASING FACTOR 2, MITOCHONDRIAL"/>
    <property type="match status" value="1"/>
</dbReference>
<dbReference type="PANTHER" id="PTHR43261">
    <property type="entry name" value="TRANSLATION ELONGATION FACTOR G-RELATED"/>
    <property type="match status" value="1"/>
</dbReference>
<dbReference type="Pfam" id="PF22042">
    <property type="entry name" value="EF-G_D2"/>
    <property type="match status" value="1"/>
</dbReference>
<dbReference type="Pfam" id="PF00679">
    <property type="entry name" value="EFG_C"/>
    <property type="match status" value="1"/>
</dbReference>
<dbReference type="Pfam" id="PF14492">
    <property type="entry name" value="EFG_III"/>
    <property type="match status" value="1"/>
</dbReference>
<dbReference type="Pfam" id="PF03764">
    <property type="entry name" value="EFG_IV"/>
    <property type="match status" value="1"/>
</dbReference>
<dbReference type="Pfam" id="PF00009">
    <property type="entry name" value="GTP_EFTU"/>
    <property type="match status" value="1"/>
</dbReference>
<dbReference type="PRINTS" id="PR00315">
    <property type="entry name" value="ELONGATNFCT"/>
</dbReference>
<dbReference type="PRINTS" id="PR01037">
    <property type="entry name" value="TCRTETOQM"/>
</dbReference>
<dbReference type="SMART" id="SM00889">
    <property type="entry name" value="EFG_IV"/>
    <property type="match status" value="1"/>
</dbReference>
<dbReference type="SUPFAM" id="SSF54980">
    <property type="entry name" value="EF-G C-terminal domain-like"/>
    <property type="match status" value="2"/>
</dbReference>
<dbReference type="SUPFAM" id="SSF52540">
    <property type="entry name" value="P-loop containing nucleoside triphosphate hydrolases"/>
    <property type="match status" value="1"/>
</dbReference>
<dbReference type="SUPFAM" id="SSF54211">
    <property type="entry name" value="Ribosomal protein S5 domain 2-like"/>
    <property type="match status" value="1"/>
</dbReference>
<dbReference type="SUPFAM" id="SSF50447">
    <property type="entry name" value="Translation proteins"/>
    <property type="match status" value="1"/>
</dbReference>
<dbReference type="PROSITE" id="PS00301">
    <property type="entry name" value="G_TR_1"/>
    <property type="match status" value="1"/>
</dbReference>
<dbReference type="PROSITE" id="PS51722">
    <property type="entry name" value="G_TR_2"/>
    <property type="match status" value="1"/>
</dbReference>
<keyword id="KW-0002">3D-structure</keyword>
<keyword id="KW-0046">Antibiotic resistance</keyword>
<keyword id="KW-0342">GTP-binding</keyword>
<keyword id="KW-0547">Nucleotide-binding</keyword>
<keyword id="KW-0614">Plasmid</keyword>
<keyword id="KW-0648">Protein biosynthesis</keyword>
<accession>P10952</accession>
<feature type="chain" id="PRO_0000091505" description="Tetracycline resistance protein TetO">
    <location>
        <begin position="1"/>
        <end position="639"/>
    </location>
</feature>
<feature type="domain" description="tr-type G" evidence="2">
    <location>
        <begin position="1"/>
        <end position="244"/>
    </location>
</feature>
<feature type="binding site" evidence="1">
    <location>
        <begin position="10"/>
        <end position="17"/>
    </location>
    <ligand>
        <name>GTP</name>
        <dbReference type="ChEBI" id="CHEBI:37565"/>
    </ligand>
</feature>
<feature type="binding site" evidence="1">
    <location>
        <begin position="74"/>
        <end position="78"/>
    </location>
    <ligand>
        <name>GTP</name>
        <dbReference type="ChEBI" id="CHEBI:37565"/>
    </ligand>
</feature>
<feature type="binding site" evidence="1">
    <location>
        <begin position="128"/>
        <end position="131"/>
    </location>
    <ligand>
        <name>GTP</name>
        <dbReference type="ChEBI" id="CHEBI:37565"/>
    </ligand>
</feature>
<comment type="function">
    <text>Abolishes the inhibitory effect of tetracyclin on protein synthesis by a non-covalent modification of the ribosomes.</text>
</comment>
<comment type="similarity">
    <text evidence="2">Belongs to the TRAFAC class translation factor GTPase superfamily. Classic translation factor GTPase family. TetM/TetO subfamily.</text>
</comment>
<protein>
    <recommendedName>
        <fullName>Tetracycline resistance protein TetO</fullName>
        <shortName>Tet(O)</shortName>
    </recommendedName>
</protein>
<proteinExistence type="evidence at protein level"/>
<gene>
    <name type="primary">tetO</name>
    <name type="synonym">tet(O)</name>
</gene>
<organism>
    <name type="scientific">Campylobacter jejuni</name>
    <dbReference type="NCBI Taxonomy" id="197"/>
    <lineage>
        <taxon>Bacteria</taxon>
        <taxon>Pseudomonadati</taxon>
        <taxon>Campylobacterota</taxon>
        <taxon>Epsilonproteobacteria</taxon>
        <taxon>Campylobacterales</taxon>
        <taxon>Campylobacteraceae</taxon>
        <taxon>Campylobacter</taxon>
    </lineage>
</organism>
<name>TETO_CAMJU</name>
<sequence length="639" mass="72563">MKIINLGILAHVDAGKTTLTESLLYTSGAIAELGSVDEGTTRTDTMNLERQRGITIQTAVTSFQWEDVKVNIIDTPGHMDFLAEVYRSLSVLDGAVLLVSAKDGIQAQTRILFHALQIMKIPTIFFINKIDQEGIDLPMVYREMKAKLSSEIIVKQKVGQHPHINVTDNDDMEQWDAVIMGNDELLEKYMSGKPFKMSELEQEENRRFQNGTLFPVYHGSAKNNLGTRQLIEVIASKFYSSTPEGQSELCGQVFKIEYSEKRRRFVYVRIYSGTLHLRDVIRISEKEKIKITEMYVPTNGELYSSDTACSGDIVILPNDVLQLNSILGNEILLPQRKFIENPLPMIQTTIAVKKSEQREILLGALTEISDCDPLLKYYVDTTTHEIILSFLGNVQMEVICAILEEKYHVEAEIKEPTVIYMERPLRKAEYTIHIEVPPNPFWASVGLSIEPLPIGSGVQYESRVSLGYLNQSFQNAVMEGVLYGCEQGLYGWKVTDCKICFEYGLYYSPVSTPADFRLLSPIVLEQALKKAGTELLEPYLHFEIYAPQEYLSRAYHDAPRYCADIVSTQIKNDEVILKGEIPARCIQEYRNDLTYFTNGQGVCLTELKGYQPAIGKFICQPRRPNSRIDKVRHMFHKLA</sequence>
<geneLocation type="plasmid">
    <name>pUA466</name>
</geneLocation>
<evidence type="ECO:0000250" key="1"/>
<evidence type="ECO:0000255" key="2">
    <source>
        <dbReference type="PROSITE-ProRule" id="PRU01059"/>
    </source>
</evidence>